<comment type="function">
    <text evidence="1">Catalyzes the reversible transfer of the terminal phosphate group between ATP and AMP. Plays an important role in cellular energy homeostasis and in adenine nucleotide metabolism.</text>
</comment>
<comment type="catalytic activity">
    <reaction evidence="1">
        <text>AMP + ATP = 2 ADP</text>
        <dbReference type="Rhea" id="RHEA:12973"/>
        <dbReference type="ChEBI" id="CHEBI:30616"/>
        <dbReference type="ChEBI" id="CHEBI:456215"/>
        <dbReference type="ChEBI" id="CHEBI:456216"/>
        <dbReference type="EC" id="2.7.4.3"/>
    </reaction>
</comment>
<comment type="pathway">
    <text evidence="1">Purine metabolism; AMP biosynthesis via salvage pathway; AMP from ADP: step 1/1.</text>
</comment>
<comment type="subunit">
    <text evidence="1">Monomer.</text>
</comment>
<comment type="subcellular location">
    <subcellularLocation>
        <location evidence="1">Cytoplasm</location>
    </subcellularLocation>
</comment>
<comment type="domain">
    <text evidence="1">Consists of three domains, a large central CORE domain and two small peripheral domains, NMPbind and LID, which undergo movements during catalysis. The LID domain closes over the site of phosphoryl transfer upon ATP binding. Assembling and dissambling the active center during each catalytic cycle provides an effective means to prevent ATP hydrolysis.</text>
</comment>
<comment type="similarity">
    <text evidence="1">Belongs to the adenylate kinase family.</text>
</comment>
<evidence type="ECO:0000255" key="1">
    <source>
        <dbReference type="HAMAP-Rule" id="MF_00235"/>
    </source>
</evidence>
<feature type="chain" id="PRO_0000158772" description="Adenylate kinase">
    <location>
        <begin position="1"/>
        <end position="211"/>
    </location>
</feature>
<feature type="region of interest" description="NMP" evidence="1">
    <location>
        <begin position="33"/>
        <end position="62"/>
    </location>
</feature>
<feature type="region of interest" description="LID" evidence="1">
    <location>
        <begin position="129"/>
        <end position="161"/>
    </location>
</feature>
<feature type="binding site" evidence="1">
    <location>
        <begin position="13"/>
        <end position="18"/>
    </location>
    <ligand>
        <name>ATP</name>
        <dbReference type="ChEBI" id="CHEBI:30616"/>
    </ligand>
</feature>
<feature type="binding site" evidence="1">
    <location>
        <position position="34"/>
    </location>
    <ligand>
        <name>AMP</name>
        <dbReference type="ChEBI" id="CHEBI:456215"/>
    </ligand>
</feature>
<feature type="binding site" evidence="1">
    <location>
        <position position="39"/>
    </location>
    <ligand>
        <name>AMP</name>
        <dbReference type="ChEBI" id="CHEBI:456215"/>
    </ligand>
</feature>
<feature type="binding site" evidence="1">
    <location>
        <begin position="60"/>
        <end position="62"/>
    </location>
    <ligand>
        <name>AMP</name>
        <dbReference type="ChEBI" id="CHEBI:456215"/>
    </ligand>
</feature>
<feature type="binding site" evidence="1">
    <location>
        <begin position="88"/>
        <end position="91"/>
    </location>
    <ligand>
        <name>AMP</name>
        <dbReference type="ChEBI" id="CHEBI:456215"/>
    </ligand>
</feature>
<feature type="binding site" evidence="1">
    <location>
        <position position="95"/>
    </location>
    <ligand>
        <name>AMP</name>
        <dbReference type="ChEBI" id="CHEBI:456215"/>
    </ligand>
</feature>
<feature type="binding site" evidence="1">
    <location>
        <position position="130"/>
    </location>
    <ligand>
        <name>ATP</name>
        <dbReference type="ChEBI" id="CHEBI:30616"/>
    </ligand>
</feature>
<feature type="binding site" evidence="1">
    <location>
        <begin position="139"/>
        <end position="140"/>
    </location>
    <ligand>
        <name>ATP</name>
        <dbReference type="ChEBI" id="CHEBI:30616"/>
    </ligand>
</feature>
<feature type="binding site" evidence="1">
    <location>
        <position position="158"/>
    </location>
    <ligand>
        <name>AMP</name>
        <dbReference type="ChEBI" id="CHEBI:456215"/>
    </ligand>
</feature>
<feature type="binding site" evidence="1">
    <location>
        <position position="169"/>
    </location>
    <ligand>
        <name>AMP</name>
        <dbReference type="ChEBI" id="CHEBI:456215"/>
    </ligand>
</feature>
<feature type="binding site" evidence="1">
    <location>
        <position position="197"/>
    </location>
    <ligand>
        <name>ATP</name>
        <dbReference type="ChEBI" id="CHEBI:30616"/>
    </ligand>
</feature>
<keyword id="KW-0067">ATP-binding</keyword>
<keyword id="KW-0963">Cytoplasm</keyword>
<keyword id="KW-0418">Kinase</keyword>
<keyword id="KW-0545">Nucleotide biosynthesis</keyword>
<keyword id="KW-0547">Nucleotide-binding</keyword>
<keyword id="KW-1185">Reference proteome</keyword>
<keyword id="KW-0808">Transferase</keyword>
<name>KAD_FUSNN</name>
<accession>Q8RE31</accession>
<gene>
    <name evidence="1" type="primary">adk</name>
    <name type="ordered locus">FN1298</name>
</gene>
<reference key="1">
    <citation type="journal article" date="2002" name="J. Bacteriol.">
        <title>Genome sequence and analysis of the oral bacterium Fusobacterium nucleatum strain ATCC 25586.</title>
        <authorList>
            <person name="Kapatral V."/>
            <person name="Anderson I."/>
            <person name="Ivanova N."/>
            <person name="Reznik G."/>
            <person name="Los T."/>
            <person name="Lykidis A."/>
            <person name="Bhattacharyya A."/>
            <person name="Bartman A."/>
            <person name="Gardner W."/>
            <person name="Grechkin G."/>
            <person name="Zhu L."/>
            <person name="Vasieva O."/>
            <person name="Chu L."/>
            <person name="Kogan Y."/>
            <person name="Chaga O."/>
            <person name="Goltsman E."/>
            <person name="Bernal A."/>
            <person name="Larsen N."/>
            <person name="D'Souza M."/>
            <person name="Walunas T."/>
            <person name="Pusch G."/>
            <person name="Haselkorn R."/>
            <person name="Fonstein M."/>
            <person name="Kyrpides N.C."/>
            <person name="Overbeek R."/>
        </authorList>
    </citation>
    <scope>NUCLEOTIDE SEQUENCE [LARGE SCALE GENOMIC DNA]</scope>
    <source>
        <strain>ATCC 25586 / DSM 15643 / BCRC 10681 / CIP 101130 / JCM 8532 / KCTC 2640 / LMG 13131 / VPI 4355</strain>
    </source>
</reference>
<protein>
    <recommendedName>
        <fullName evidence="1">Adenylate kinase</fullName>
        <shortName evidence="1">AK</shortName>
        <ecNumber evidence="1">2.7.4.3</ecNumber>
    </recommendedName>
    <alternativeName>
        <fullName evidence="1">ATP-AMP transphosphorylase</fullName>
    </alternativeName>
    <alternativeName>
        <fullName evidence="1">ATP:AMP phosphotransferase</fullName>
    </alternativeName>
    <alternativeName>
        <fullName evidence="1">Adenylate monophosphate kinase</fullName>
    </alternativeName>
</protein>
<sequence>MINLNLVLFGAPGAGKGTQAKFIVDKYGIPQISTGDILRVAVANKTKLGLEAKKFMDAGQLVPDEIVNGLVAERLAEKDCEKGFIMDGFPRNVAQAKVLDEILTKLGKQIEKVIALNVPDKDIIERITGRRTSKVTGKIYHIKFNPPVDEKPEDLVQRADDTEEVVVKRLETYHNQTAPVLDYYKVQNKVTEIDGTKKLEDITQDIFKILG</sequence>
<organism>
    <name type="scientific">Fusobacterium nucleatum subsp. nucleatum (strain ATCC 25586 / DSM 15643 / BCRC 10681 / CIP 101130 / JCM 8532 / KCTC 2640 / LMG 13131 / VPI 4355)</name>
    <dbReference type="NCBI Taxonomy" id="190304"/>
    <lineage>
        <taxon>Bacteria</taxon>
        <taxon>Fusobacteriati</taxon>
        <taxon>Fusobacteriota</taxon>
        <taxon>Fusobacteriia</taxon>
        <taxon>Fusobacteriales</taxon>
        <taxon>Fusobacteriaceae</taxon>
        <taxon>Fusobacterium</taxon>
    </lineage>
</organism>
<dbReference type="EC" id="2.7.4.3" evidence="1"/>
<dbReference type="EMBL" id="AE009951">
    <property type="protein sequence ID" value="AAL95494.1"/>
    <property type="molecule type" value="Genomic_DNA"/>
</dbReference>
<dbReference type="RefSeq" id="NP_604195.1">
    <property type="nucleotide sequence ID" value="NC_003454.1"/>
</dbReference>
<dbReference type="RefSeq" id="WP_011017050.1">
    <property type="nucleotide sequence ID" value="NZ_CP028101.1"/>
</dbReference>
<dbReference type="SMR" id="Q8RE31"/>
<dbReference type="FunCoup" id="Q8RE31">
    <property type="interactions" value="385"/>
</dbReference>
<dbReference type="STRING" id="190304.FN1298"/>
<dbReference type="PaxDb" id="190304-FN1298"/>
<dbReference type="EnsemblBacteria" id="AAL95494">
    <property type="protein sequence ID" value="AAL95494"/>
    <property type="gene ID" value="FN1298"/>
</dbReference>
<dbReference type="GeneID" id="79784274"/>
<dbReference type="KEGG" id="fnu:FN1298"/>
<dbReference type="PATRIC" id="fig|190304.8.peg.1863"/>
<dbReference type="eggNOG" id="COG0563">
    <property type="taxonomic scope" value="Bacteria"/>
</dbReference>
<dbReference type="HOGENOM" id="CLU_032354_1_2_0"/>
<dbReference type="InParanoid" id="Q8RE31"/>
<dbReference type="BioCyc" id="FNUC190304:G1FZS-1873-MONOMER"/>
<dbReference type="UniPathway" id="UPA00588">
    <property type="reaction ID" value="UER00649"/>
</dbReference>
<dbReference type="Proteomes" id="UP000002521">
    <property type="component" value="Chromosome"/>
</dbReference>
<dbReference type="GO" id="GO:0005737">
    <property type="term" value="C:cytoplasm"/>
    <property type="evidence" value="ECO:0000318"/>
    <property type="project" value="GO_Central"/>
</dbReference>
<dbReference type="GO" id="GO:0005829">
    <property type="term" value="C:cytosol"/>
    <property type="evidence" value="ECO:0000318"/>
    <property type="project" value="GO_Central"/>
</dbReference>
<dbReference type="GO" id="GO:0004017">
    <property type="term" value="F:adenylate kinase activity"/>
    <property type="evidence" value="ECO:0000318"/>
    <property type="project" value="GO_Central"/>
</dbReference>
<dbReference type="GO" id="GO:0005524">
    <property type="term" value="F:ATP binding"/>
    <property type="evidence" value="ECO:0007669"/>
    <property type="project" value="UniProtKB-UniRule"/>
</dbReference>
<dbReference type="GO" id="GO:0004550">
    <property type="term" value="F:nucleoside diphosphate kinase activity"/>
    <property type="evidence" value="ECO:0000318"/>
    <property type="project" value="GO_Central"/>
</dbReference>
<dbReference type="GO" id="GO:0044209">
    <property type="term" value="P:AMP salvage"/>
    <property type="evidence" value="ECO:0007669"/>
    <property type="project" value="UniProtKB-UniRule"/>
</dbReference>
<dbReference type="GO" id="GO:0009132">
    <property type="term" value="P:nucleoside diphosphate metabolic process"/>
    <property type="evidence" value="ECO:0000318"/>
    <property type="project" value="GO_Central"/>
</dbReference>
<dbReference type="GO" id="GO:0009123">
    <property type="term" value="P:nucleoside monophosphate metabolic process"/>
    <property type="evidence" value="ECO:0000318"/>
    <property type="project" value="GO_Central"/>
</dbReference>
<dbReference type="CDD" id="cd01428">
    <property type="entry name" value="ADK"/>
    <property type="match status" value="1"/>
</dbReference>
<dbReference type="FunFam" id="3.40.50.300:FF:000106">
    <property type="entry name" value="Adenylate kinase mitochondrial"/>
    <property type="match status" value="1"/>
</dbReference>
<dbReference type="Gene3D" id="3.40.50.300">
    <property type="entry name" value="P-loop containing nucleotide triphosphate hydrolases"/>
    <property type="match status" value="1"/>
</dbReference>
<dbReference type="HAMAP" id="MF_00235">
    <property type="entry name" value="Adenylate_kinase_Adk"/>
    <property type="match status" value="1"/>
</dbReference>
<dbReference type="InterPro" id="IPR006259">
    <property type="entry name" value="Adenyl_kin_sub"/>
</dbReference>
<dbReference type="InterPro" id="IPR000850">
    <property type="entry name" value="Adenylat/UMP-CMP_kin"/>
</dbReference>
<dbReference type="InterPro" id="IPR033690">
    <property type="entry name" value="Adenylat_kinase_CS"/>
</dbReference>
<dbReference type="InterPro" id="IPR027417">
    <property type="entry name" value="P-loop_NTPase"/>
</dbReference>
<dbReference type="NCBIfam" id="TIGR01351">
    <property type="entry name" value="adk"/>
    <property type="match status" value="1"/>
</dbReference>
<dbReference type="NCBIfam" id="NF001380">
    <property type="entry name" value="PRK00279.1-2"/>
    <property type="match status" value="1"/>
</dbReference>
<dbReference type="NCBIfam" id="NF001381">
    <property type="entry name" value="PRK00279.1-3"/>
    <property type="match status" value="1"/>
</dbReference>
<dbReference type="NCBIfam" id="NF011100">
    <property type="entry name" value="PRK14527.1"/>
    <property type="match status" value="1"/>
</dbReference>
<dbReference type="PANTHER" id="PTHR23359">
    <property type="entry name" value="NUCLEOTIDE KINASE"/>
    <property type="match status" value="1"/>
</dbReference>
<dbReference type="Pfam" id="PF00406">
    <property type="entry name" value="ADK"/>
    <property type="match status" value="1"/>
</dbReference>
<dbReference type="PRINTS" id="PR00094">
    <property type="entry name" value="ADENYLTKNASE"/>
</dbReference>
<dbReference type="SUPFAM" id="SSF52540">
    <property type="entry name" value="P-loop containing nucleoside triphosphate hydrolases"/>
    <property type="match status" value="1"/>
</dbReference>
<dbReference type="PROSITE" id="PS00113">
    <property type="entry name" value="ADENYLATE_KINASE"/>
    <property type="match status" value="1"/>
</dbReference>
<proteinExistence type="inferred from homology"/>